<gene>
    <name type="ordered locus">XAC1110</name>
</gene>
<comment type="function">
    <text evidence="1">Binds to DNA and alters its conformation. May be involved in regulation of gene expression, nucleoid organization and DNA protection.</text>
</comment>
<comment type="subunit">
    <text evidence="1">Homodimer.</text>
</comment>
<comment type="subcellular location">
    <subcellularLocation>
        <location evidence="1">Cytoplasm</location>
        <location evidence="1">Nucleoid</location>
    </subcellularLocation>
</comment>
<comment type="similarity">
    <text evidence="1">Belongs to the YbaB/EbfC family.</text>
</comment>
<feature type="chain" id="PRO_0000170467" description="Nucleoid-associated protein XAC1110">
    <location>
        <begin position="1"/>
        <end position="106"/>
    </location>
</feature>
<feature type="region of interest" description="Disordered" evidence="2">
    <location>
        <begin position="80"/>
        <end position="106"/>
    </location>
</feature>
<feature type="compositionally biased region" description="Basic and acidic residues" evidence="2">
    <location>
        <begin position="80"/>
        <end position="89"/>
    </location>
</feature>
<name>Y1110_XANAC</name>
<reference key="1">
    <citation type="journal article" date="2002" name="Nature">
        <title>Comparison of the genomes of two Xanthomonas pathogens with differing host specificities.</title>
        <authorList>
            <person name="da Silva A.C.R."/>
            <person name="Ferro J.A."/>
            <person name="Reinach F.C."/>
            <person name="Farah C.S."/>
            <person name="Furlan L.R."/>
            <person name="Quaggio R.B."/>
            <person name="Monteiro-Vitorello C.B."/>
            <person name="Van Sluys M.A."/>
            <person name="Almeida N.F. Jr."/>
            <person name="Alves L.M.C."/>
            <person name="do Amaral A.M."/>
            <person name="Bertolini M.C."/>
            <person name="Camargo L.E.A."/>
            <person name="Camarotte G."/>
            <person name="Cannavan F."/>
            <person name="Cardozo J."/>
            <person name="Chambergo F."/>
            <person name="Ciapina L.P."/>
            <person name="Cicarelli R.M.B."/>
            <person name="Coutinho L.L."/>
            <person name="Cursino-Santos J.R."/>
            <person name="El-Dorry H."/>
            <person name="Faria J.B."/>
            <person name="Ferreira A.J.S."/>
            <person name="Ferreira R.C.C."/>
            <person name="Ferro M.I.T."/>
            <person name="Formighieri E.F."/>
            <person name="Franco M.C."/>
            <person name="Greggio C.C."/>
            <person name="Gruber A."/>
            <person name="Katsuyama A.M."/>
            <person name="Kishi L.T."/>
            <person name="Leite R.P."/>
            <person name="Lemos E.G.M."/>
            <person name="Lemos M.V.F."/>
            <person name="Locali E.C."/>
            <person name="Machado M.A."/>
            <person name="Madeira A.M.B.N."/>
            <person name="Martinez-Rossi N.M."/>
            <person name="Martins E.C."/>
            <person name="Meidanis J."/>
            <person name="Menck C.F.M."/>
            <person name="Miyaki C.Y."/>
            <person name="Moon D.H."/>
            <person name="Moreira L.M."/>
            <person name="Novo M.T.M."/>
            <person name="Okura V.K."/>
            <person name="Oliveira M.C."/>
            <person name="Oliveira V.R."/>
            <person name="Pereira H.A."/>
            <person name="Rossi A."/>
            <person name="Sena J.A.D."/>
            <person name="Silva C."/>
            <person name="de Souza R.F."/>
            <person name="Spinola L.A.F."/>
            <person name="Takita M.A."/>
            <person name="Tamura R.E."/>
            <person name="Teixeira E.C."/>
            <person name="Tezza R.I.D."/>
            <person name="Trindade dos Santos M."/>
            <person name="Truffi D."/>
            <person name="Tsai S.M."/>
            <person name="White F.F."/>
            <person name="Setubal J.C."/>
            <person name="Kitajima J.P."/>
        </authorList>
    </citation>
    <scope>NUCLEOTIDE SEQUENCE [LARGE SCALE GENOMIC DNA]</scope>
    <source>
        <strain>306</strain>
    </source>
</reference>
<proteinExistence type="inferred from homology"/>
<protein>
    <recommendedName>
        <fullName evidence="1">Nucleoid-associated protein XAC1110</fullName>
    </recommendedName>
</protein>
<organism>
    <name type="scientific">Xanthomonas axonopodis pv. citri (strain 306)</name>
    <dbReference type="NCBI Taxonomy" id="190486"/>
    <lineage>
        <taxon>Bacteria</taxon>
        <taxon>Pseudomonadati</taxon>
        <taxon>Pseudomonadota</taxon>
        <taxon>Gammaproteobacteria</taxon>
        <taxon>Lysobacterales</taxon>
        <taxon>Lysobacteraceae</taxon>
        <taxon>Xanthomonas</taxon>
    </lineage>
</organism>
<dbReference type="EMBL" id="AE008923">
    <property type="protein sequence ID" value="AAM35983.1"/>
    <property type="molecule type" value="Genomic_DNA"/>
</dbReference>
<dbReference type="RefSeq" id="WP_005913896.1">
    <property type="nucleotide sequence ID" value="NC_003919.1"/>
</dbReference>
<dbReference type="SMR" id="Q8PNG1"/>
<dbReference type="KEGG" id="xac:XAC1110"/>
<dbReference type="eggNOG" id="COG0718">
    <property type="taxonomic scope" value="Bacteria"/>
</dbReference>
<dbReference type="HOGENOM" id="CLU_140930_0_0_6"/>
<dbReference type="Proteomes" id="UP000000576">
    <property type="component" value="Chromosome"/>
</dbReference>
<dbReference type="GO" id="GO:0043590">
    <property type="term" value="C:bacterial nucleoid"/>
    <property type="evidence" value="ECO:0007669"/>
    <property type="project" value="UniProtKB-UniRule"/>
</dbReference>
<dbReference type="GO" id="GO:0005829">
    <property type="term" value="C:cytosol"/>
    <property type="evidence" value="ECO:0007669"/>
    <property type="project" value="TreeGrafter"/>
</dbReference>
<dbReference type="GO" id="GO:0003677">
    <property type="term" value="F:DNA binding"/>
    <property type="evidence" value="ECO:0007669"/>
    <property type="project" value="UniProtKB-UniRule"/>
</dbReference>
<dbReference type="FunFam" id="3.30.1310.10:FF:000001">
    <property type="entry name" value="Nucleoid-associated protein YbaB"/>
    <property type="match status" value="1"/>
</dbReference>
<dbReference type="Gene3D" id="3.30.1310.10">
    <property type="entry name" value="Nucleoid-associated protein YbaB-like domain"/>
    <property type="match status" value="1"/>
</dbReference>
<dbReference type="HAMAP" id="MF_00274">
    <property type="entry name" value="DNA_YbaB_EbfC"/>
    <property type="match status" value="1"/>
</dbReference>
<dbReference type="InterPro" id="IPR036894">
    <property type="entry name" value="YbaB-like_sf"/>
</dbReference>
<dbReference type="InterPro" id="IPR004401">
    <property type="entry name" value="YbaB/EbfC"/>
</dbReference>
<dbReference type="NCBIfam" id="TIGR00103">
    <property type="entry name" value="DNA_YbaB_EbfC"/>
    <property type="match status" value="1"/>
</dbReference>
<dbReference type="PANTHER" id="PTHR33449">
    <property type="entry name" value="NUCLEOID-ASSOCIATED PROTEIN YBAB"/>
    <property type="match status" value="1"/>
</dbReference>
<dbReference type="PANTHER" id="PTHR33449:SF1">
    <property type="entry name" value="NUCLEOID-ASSOCIATED PROTEIN YBAB"/>
    <property type="match status" value="1"/>
</dbReference>
<dbReference type="Pfam" id="PF02575">
    <property type="entry name" value="YbaB_DNA_bd"/>
    <property type="match status" value="1"/>
</dbReference>
<dbReference type="PIRSF" id="PIRSF004555">
    <property type="entry name" value="UCP004555"/>
    <property type="match status" value="1"/>
</dbReference>
<dbReference type="SUPFAM" id="SSF82607">
    <property type="entry name" value="YbaB-like"/>
    <property type="match status" value="1"/>
</dbReference>
<sequence>MRGNIAQLMQQAQKMQENLQRAQEELAKLEVTGTAGGGMVSVTLTGAKECRKVRIDPSILSDQEMAEDLIAAAFNDASNKIDAESKDRMGSATAGMQLPPGMKLPF</sequence>
<accession>Q8PNG1</accession>
<evidence type="ECO:0000255" key="1">
    <source>
        <dbReference type="HAMAP-Rule" id="MF_00274"/>
    </source>
</evidence>
<evidence type="ECO:0000256" key="2">
    <source>
        <dbReference type="SAM" id="MobiDB-lite"/>
    </source>
</evidence>
<keyword id="KW-0963">Cytoplasm</keyword>
<keyword id="KW-0238">DNA-binding</keyword>